<protein>
    <recommendedName>
        <fullName evidence="5">Aspartate aminotransferase</fullName>
        <shortName evidence="5">AAT</shortName>
        <shortName evidence="6">AspAT</shortName>
        <ecNumber evidence="4">2.6.1.1</ecNumber>
    </recommendedName>
    <alternativeName>
        <fullName evidence="6">Transaminase A</fullName>
    </alternativeName>
</protein>
<evidence type="ECO:0000250" key="1">
    <source>
        <dbReference type="UniProtKB" id="P00509"/>
    </source>
</evidence>
<evidence type="ECO:0000250" key="2">
    <source>
        <dbReference type="UniProtKB" id="P58350"/>
    </source>
</evidence>
<evidence type="ECO:0000250" key="3">
    <source>
        <dbReference type="UniProtKB" id="Q56232"/>
    </source>
</evidence>
<evidence type="ECO:0000269" key="4">
    <source>
    </source>
</evidence>
<evidence type="ECO:0000303" key="5">
    <source>
    </source>
</evidence>
<evidence type="ECO:0000305" key="6"/>
<gene>
    <name evidence="5" type="primary">aatB</name>
</gene>
<dbReference type="EC" id="2.6.1.1" evidence="4"/>
<dbReference type="EMBL" id="L12149">
    <property type="protein sequence ID" value="AAA71965.1"/>
    <property type="molecule type" value="Unassigned_DNA"/>
</dbReference>
<dbReference type="PIR" id="A40658">
    <property type="entry name" value="A40658"/>
</dbReference>
<dbReference type="SMR" id="Q06191"/>
<dbReference type="STRING" id="382.DU99_17730"/>
<dbReference type="SABIO-RK" id="Q06191"/>
<dbReference type="GO" id="GO:0005737">
    <property type="term" value="C:cytoplasm"/>
    <property type="evidence" value="ECO:0007669"/>
    <property type="project" value="UniProtKB-SubCell"/>
</dbReference>
<dbReference type="GO" id="GO:0004069">
    <property type="term" value="F:L-aspartate:2-oxoglutarate aminotransferase activity"/>
    <property type="evidence" value="ECO:0007669"/>
    <property type="project" value="UniProtKB-EC"/>
</dbReference>
<dbReference type="GO" id="GO:0030170">
    <property type="term" value="F:pyridoxal phosphate binding"/>
    <property type="evidence" value="ECO:0007669"/>
    <property type="project" value="InterPro"/>
</dbReference>
<dbReference type="GO" id="GO:0006520">
    <property type="term" value="P:amino acid metabolic process"/>
    <property type="evidence" value="ECO:0007669"/>
    <property type="project" value="InterPro"/>
</dbReference>
<dbReference type="GO" id="GO:0009058">
    <property type="term" value="P:biosynthetic process"/>
    <property type="evidence" value="ECO:0007669"/>
    <property type="project" value="InterPro"/>
</dbReference>
<dbReference type="CDD" id="cd00609">
    <property type="entry name" value="AAT_like"/>
    <property type="match status" value="1"/>
</dbReference>
<dbReference type="FunFam" id="3.40.640.10:FF:000033">
    <property type="entry name" value="Aspartate aminotransferase"/>
    <property type="match status" value="1"/>
</dbReference>
<dbReference type="Gene3D" id="3.90.1150.10">
    <property type="entry name" value="Aspartate Aminotransferase, domain 1"/>
    <property type="match status" value="1"/>
</dbReference>
<dbReference type="Gene3D" id="3.40.640.10">
    <property type="entry name" value="Type I PLP-dependent aspartate aminotransferase-like (Major domain)"/>
    <property type="match status" value="1"/>
</dbReference>
<dbReference type="InterPro" id="IPR004839">
    <property type="entry name" value="Aminotransferase_I/II_large"/>
</dbReference>
<dbReference type="InterPro" id="IPR050596">
    <property type="entry name" value="AspAT/PAT-like"/>
</dbReference>
<dbReference type="InterPro" id="IPR004838">
    <property type="entry name" value="NHTrfase_class1_PyrdxlP-BS"/>
</dbReference>
<dbReference type="InterPro" id="IPR015424">
    <property type="entry name" value="PyrdxlP-dep_Trfase"/>
</dbReference>
<dbReference type="InterPro" id="IPR015421">
    <property type="entry name" value="PyrdxlP-dep_Trfase_major"/>
</dbReference>
<dbReference type="InterPro" id="IPR015422">
    <property type="entry name" value="PyrdxlP-dep_Trfase_small"/>
</dbReference>
<dbReference type="PANTHER" id="PTHR46383">
    <property type="entry name" value="ASPARTATE AMINOTRANSFERASE"/>
    <property type="match status" value="1"/>
</dbReference>
<dbReference type="PANTHER" id="PTHR46383:SF1">
    <property type="entry name" value="ASPARTATE AMINOTRANSFERASE"/>
    <property type="match status" value="1"/>
</dbReference>
<dbReference type="Pfam" id="PF00155">
    <property type="entry name" value="Aminotran_1_2"/>
    <property type="match status" value="1"/>
</dbReference>
<dbReference type="SUPFAM" id="SSF53383">
    <property type="entry name" value="PLP-dependent transferases"/>
    <property type="match status" value="1"/>
</dbReference>
<dbReference type="PROSITE" id="PS00105">
    <property type="entry name" value="AA_TRANSFER_CLASS_1"/>
    <property type="match status" value="1"/>
</dbReference>
<sequence>MTINATVKEAGFRPASRISSIGVSEILKIGARAAAMKREGKPVIILGAGEPDFDTPDHVKQAASDAIHRGETKYTALDGTPELKKAIREKFQRENGLAYELDEITVATGAKQILFNAMMASLDPGDEVVIPTPYWTSYSDIVQICEGKPILIACDASSGFRLTAQKLEAAITPRTRWVLLNSPSNPSGAAYSAADYRPLLDVLLKHPHVWLLVDDMYEHIVYDAFRFVTPARLEPGLKDRTLTVNGVSKAYAMTGWRIGYAGGPRALIKAMAVVQSQATSCPSSVSQAASVAALNGPQDFLKERTESFQRRRNLVVNGLNAIEGLDCRVPEGAFYTFSGCAGVARRVTPSGKRIESDTDFCAYLLEDSHVAVVPGSAFGLSPYFRISYATSEAELKEALERISAACKRLS</sequence>
<name>AAT_RHIML</name>
<proteinExistence type="evidence at protein level"/>
<organism>
    <name type="scientific">Rhizobium meliloti</name>
    <name type="common">Ensifer meliloti</name>
    <name type="synonym">Sinorhizobium meliloti</name>
    <dbReference type="NCBI Taxonomy" id="382"/>
    <lineage>
        <taxon>Bacteria</taxon>
        <taxon>Pseudomonadati</taxon>
        <taxon>Pseudomonadota</taxon>
        <taxon>Alphaproteobacteria</taxon>
        <taxon>Hyphomicrobiales</taxon>
        <taxon>Rhizobiaceae</taxon>
        <taxon>Sinorhizobium/Ensifer group</taxon>
        <taxon>Sinorhizobium</taxon>
    </lineage>
</organism>
<keyword id="KW-0032">Aminotransferase</keyword>
<keyword id="KW-0963">Cytoplasm</keyword>
<keyword id="KW-0663">Pyridoxal phosphate</keyword>
<keyword id="KW-0808">Transferase</keyword>
<feature type="chain" id="PRO_0000123849" description="Aspartate aminotransferase">
    <location>
        <begin position="1"/>
        <end position="410"/>
    </location>
</feature>
<feature type="binding site" evidence="1">
    <location>
        <position position="47"/>
    </location>
    <ligand>
        <name>L-aspartate</name>
        <dbReference type="ChEBI" id="CHEBI:29991"/>
    </ligand>
</feature>
<feature type="binding site" evidence="3">
    <location>
        <position position="135"/>
    </location>
    <ligand>
        <name>L-aspartate</name>
        <dbReference type="ChEBI" id="CHEBI:29991"/>
    </ligand>
</feature>
<feature type="binding site" evidence="3">
    <location>
        <position position="185"/>
    </location>
    <ligand>
        <name>L-aspartate</name>
        <dbReference type="ChEBI" id="CHEBI:29991"/>
    </ligand>
</feature>
<feature type="binding site" evidence="3">
    <location>
        <position position="385"/>
    </location>
    <ligand>
        <name>L-aspartate</name>
        <dbReference type="ChEBI" id="CHEBI:29991"/>
    </ligand>
</feature>
<feature type="modified residue" description="N6-(pyridoxal phosphate)lysine" evidence="2">
    <location>
        <position position="249"/>
    </location>
</feature>
<accession>Q06191</accession>
<reference key="1">
    <citation type="journal article" date="1993" name="J. Bacteriol.">
        <title>Isolation and characterization of a gene coding for a novel aspartate aminotransferase from Rhizobium meliloti.</title>
        <authorList>
            <person name="Alfano J.R."/>
            <person name="Kahn M.L."/>
        </authorList>
    </citation>
    <scope>NUCLEOTIDE SEQUENCE [GENOMIC DNA]</scope>
    <scope>FUNCTION</scope>
    <scope>CATALYTIC ACTIVITY</scope>
    <scope>BIOPHYSICOCHEMICAL PROPERTIES</scope>
    <scope>DISRUPTION PHENOTYPE</scope>
    <source>
        <strain>104A14</strain>
    </source>
</reference>
<comment type="function">
    <text evidence="4">Catalyzes the reversible conversion of aspartate and 2-oxoglutarate to glutamate and oxaloacetate.</text>
</comment>
<comment type="catalytic activity">
    <reaction evidence="4">
        <text>L-aspartate + 2-oxoglutarate = oxaloacetate + L-glutamate</text>
        <dbReference type="Rhea" id="RHEA:21824"/>
        <dbReference type="ChEBI" id="CHEBI:16452"/>
        <dbReference type="ChEBI" id="CHEBI:16810"/>
        <dbReference type="ChEBI" id="CHEBI:29985"/>
        <dbReference type="ChEBI" id="CHEBI:29991"/>
        <dbReference type="EC" id="2.6.1.1"/>
    </reaction>
</comment>
<comment type="cofactor">
    <cofactor evidence="2">
        <name>pyridoxal 5'-phosphate</name>
        <dbReference type="ChEBI" id="CHEBI:597326"/>
    </cofactor>
</comment>
<comment type="biophysicochemical properties">
    <kinetics>
        <KM evidence="4">5.3 mM for aspartate</KM>
        <KM evidence="4">0.87 mM for 2-oxoglutarate</KM>
        <Vmax evidence="4">2.4 umol/min/mg enzyme for oxaloacetate production</Vmax>
    </kinetics>
    <phDependence>
        <text evidence="4">Optimum pH is 8.0-8.5.</text>
    </phDependence>
</comment>
<comment type="subunit">
    <text evidence="2">Homodimer.</text>
</comment>
<comment type="subcellular location">
    <subcellularLocation>
        <location evidence="6">Cytoplasm</location>
    </subcellularLocation>
</comment>
<comment type="disruption phenotype">
    <text evidence="4">Insertion mutant is prototroph and is able to carry out symbiotic nitrogen fixation.</text>
</comment>
<comment type="similarity">
    <text evidence="6">Belongs to the class-I pyridoxal-phosphate-dependent aminotransferase family.</text>
</comment>